<feature type="chain" id="PRO_0000237341" description="Glutamate--tRNA ligase">
    <location>
        <begin position="1"/>
        <end position="468"/>
    </location>
</feature>
<feature type="short sequence motif" description="'HIGH' region" evidence="1">
    <location>
        <begin position="9"/>
        <end position="19"/>
    </location>
</feature>
<feature type="short sequence motif" description="'KMSKS' region" evidence="1">
    <location>
        <begin position="239"/>
        <end position="243"/>
    </location>
</feature>
<feature type="binding site" evidence="1">
    <location>
        <position position="242"/>
    </location>
    <ligand>
        <name>ATP</name>
        <dbReference type="ChEBI" id="CHEBI:30616"/>
    </ligand>
</feature>
<organism>
    <name type="scientific">Blochmanniella pennsylvanica (strain BPEN)</name>
    <dbReference type="NCBI Taxonomy" id="291272"/>
    <lineage>
        <taxon>Bacteria</taxon>
        <taxon>Pseudomonadati</taxon>
        <taxon>Pseudomonadota</taxon>
        <taxon>Gammaproteobacteria</taxon>
        <taxon>Enterobacterales</taxon>
        <taxon>Enterobacteriaceae</taxon>
        <taxon>ant endosymbionts</taxon>
        <taxon>Candidatus Blochmanniella</taxon>
    </lineage>
</organism>
<gene>
    <name evidence="1" type="primary">gltX</name>
    <name type="ordered locus">BPEN_521</name>
</gene>
<dbReference type="EC" id="6.1.1.17" evidence="1"/>
<dbReference type="EMBL" id="CP000016">
    <property type="protein sequence ID" value="AAZ41133.1"/>
    <property type="molecule type" value="Genomic_DNA"/>
</dbReference>
<dbReference type="RefSeq" id="WP_011283044.1">
    <property type="nucleotide sequence ID" value="NC_007292.1"/>
</dbReference>
<dbReference type="SMR" id="Q492G6"/>
<dbReference type="STRING" id="291272.BPEN_521"/>
<dbReference type="KEGG" id="bpn:BPEN_521"/>
<dbReference type="eggNOG" id="COG0008">
    <property type="taxonomic scope" value="Bacteria"/>
</dbReference>
<dbReference type="HOGENOM" id="CLU_015768_6_0_6"/>
<dbReference type="OrthoDB" id="9807503at2"/>
<dbReference type="Proteomes" id="UP000007794">
    <property type="component" value="Chromosome"/>
</dbReference>
<dbReference type="GO" id="GO:0005829">
    <property type="term" value="C:cytosol"/>
    <property type="evidence" value="ECO:0007669"/>
    <property type="project" value="TreeGrafter"/>
</dbReference>
<dbReference type="GO" id="GO:0005524">
    <property type="term" value="F:ATP binding"/>
    <property type="evidence" value="ECO:0007669"/>
    <property type="project" value="UniProtKB-UniRule"/>
</dbReference>
<dbReference type="GO" id="GO:0004818">
    <property type="term" value="F:glutamate-tRNA ligase activity"/>
    <property type="evidence" value="ECO:0007669"/>
    <property type="project" value="UniProtKB-UniRule"/>
</dbReference>
<dbReference type="GO" id="GO:0000049">
    <property type="term" value="F:tRNA binding"/>
    <property type="evidence" value="ECO:0007669"/>
    <property type="project" value="InterPro"/>
</dbReference>
<dbReference type="GO" id="GO:0008270">
    <property type="term" value="F:zinc ion binding"/>
    <property type="evidence" value="ECO:0007669"/>
    <property type="project" value="UniProtKB-UniRule"/>
</dbReference>
<dbReference type="GO" id="GO:0006424">
    <property type="term" value="P:glutamyl-tRNA aminoacylation"/>
    <property type="evidence" value="ECO:0007669"/>
    <property type="project" value="UniProtKB-UniRule"/>
</dbReference>
<dbReference type="CDD" id="cd00808">
    <property type="entry name" value="GluRS_core"/>
    <property type="match status" value="1"/>
</dbReference>
<dbReference type="FunFam" id="3.40.50.620:FF:000007">
    <property type="entry name" value="Glutamate--tRNA ligase"/>
    <property type="match status" value="1"/>
</dbReference>
<dbReference type="Gene3D" id="1.10.10.350">
    <property type="match status" value="1"/>
</dbReference>
<dbReference type="Gene3D" id="3.40.50.620">
    <property type="entry name" value="HUPs"/>
    <property type="match status" value="1"/>
</dbReference>
<dbReference type="HAMAP" id="MF_00022">
    <property type="entry name" value="Glu_tRNA_synth_type1"/>
    <property type="match status" value="1"/>
</dbReference>
<dbReference type="InterPro" id="IPR045462">
    <property type="entry name" value="aa-tRNA-synth_I_cd-bd"/>
</dbReference>
<dbReference type="InterPro" id="IPR020751">
    <property type="entry name" value="aa-tRNA-synth_I_codon-bd_sub2"/>
</dbReference>
<dbReference type="InterPro" id="IPR001412">
    <property type="entry name" value="aa-tRNA-synth_I_CS"/>
</dbReference>
<dbReference type="InterPro" id="IPR008925">
    <property type="entry name" value="aa_tRNA-synth_I_cd-bd_sf"/>
</dbReference>
<dbReference type="InterPro" id="IPR004527">
    <property type="entry name" value="Glu-tRNA-ligase_bac/mito"/>
</dbReference>
<dbReference type="InterPro" id="IPR000924">
    <property type="entry name" value="Glu/Gln-tRNA-synth"/>
</dbReference>
<dbReference type="InterPro" id="IPR020058">
    <property type="entry name" value="Glu/Gln-tRNA-synth_Ib_cat-dom"/>
</dbReference>
<dbReference type="InterPro" id="IPR049940">
    <property type="entry name" value="GluQ/Sye"/>
</dbReference>
<dbReference type="InterPro" id="IPR033910">
    <property type="entry name" value="GluRS_core"/>
</dbReference>
<dbReference type="InterPro" id="IPR014729">
    <property type="entry name" value="Rossmann-like_a/b/a_fold"/>
</dbReference>
<dbReference type="NCBIfam" id="TIGR00464">
    <property type="entry name" value="gltX_bact"/>
    <property type="match status" value="1"/>
</dbReference>
<dbReference type="PANTHER" id="PTHR43311">
    <property type="entry name" value="GLUTAMATE--TRNA LIGASE"/>
    <property type="match status" value="1"/>
</dbReference>
<dbReference type="PANTHER" id="PTHR43311:SF2">
    <property type="entry name" value="GLUTAMATE--TRNA LIGASE, MITOCHONDRIAL-RELATED"/>
    <property type="match status" value="1"/>
</dbReference>
<dbReference type="Pfam" id="PF19269">
    <property type="entry name" value="Anticodon_2"/>
    <property type="match status" value="1"/>
</dbReference>
<dbReference type="Pfam" id="PF00749">
    <property type="entry name" value="tRNA-synt_1c"/>
    <property type="match status" value="1"/>
</dbReference>
<dbReference type="PRINTS" id="PR00987">
    <property type="entry name" value="TRNASYNTHGLU"/>
</dbReference>
<dbReference type="SUPFAM" id="SSF48163">
    <property type="entry name" value="An anticodon-binding domain of class I aminoacyl-tRNA synthetases"/>
    <property type="match status" value="1"/>
</dbReference>
<dbReference type="SUPFAM" id="SSF52374">
    <property type="entry name" value="Nucleotidylyl transferase"/>
    <property type="match status" value="1"/>
</dbReference>
<dbReference type="PROSITE" id="PS00178">
    <property type="entry name" value="AA_TRNA_LIGASE_I"/>
    <property type="match status" value="1"/>
</dbReference>
<protein>
    <recommendedName>
        <fullName evidence="1">Glutamate--tRNA ligase</fullName>
        <ecNumber evidence="1">6.1.1.17</ecNumber>
    </recommendedName>
    <alternativeName>
        <fullName evidence="1">Glutamyl-tRNA synthetase</fullName>
        <shortName evidence="1">GluRS</shortName>
    </alternativeName>
</protein>
<evidence type="ECO:0000255" key="1">
    <source>
        <dbReference type="HAMAP-Rule" id="MF_00022"/>
    </source>
</evidence>
<sequence>MNIKTRFAPSPTGSIHIGNIRTALYSWLFARKQGGKFLLRIEDSDLQRSIDDTVELIVAGMRWLSLDWDEGPYFQTNRFSRYNSIISYMIQHDMAYKCYCSSERLESLRSNQIKNGEKPKYDGYCRFKSTDIYSSSISSYVVRFCNPQDGVVIFHDQIRGTITFNNKELDDLIIRRADGSPTYNFCVVIDDMDMQITHIIRGEEHINNTPRQINILKALRAPIPTYAHVSMILDNNLKKLSKRCGTLGIMQYRNDGFLPEAILNYLVRLGWSHGDQEIFSIEEMIKYFDLSRISKSPSILNLEKLLWLNHYYINHLPIDYVASHLSWHMHQQKINIQNGPKLTDIIKLFARRSRTLKEIVNNCLYFYIDFDLFDNKVAKDYLKPVAITPLKFLRKKFSNIVDWTPEIIKSIIIETVNEFNTSIDKIGMPLRVALTGTNCSPTLSITIHAIGQSRVLERIDQAIRYIST</sequence>
<proteinExistence type="inferred from homology"/>
<keyword id="KW-0030">Aminoacyl-tRNA synthetase</keyword>
<keyword id="KW-0067">ATP-binding</keyword>
<keyword id="KW-0963">Cytoplasm</keyword>
<keyword id="KW-0436">Ligase</keyword>
<keyword id="KW-0547">Nucleotide-binding</keyword>
<keyword id="KW-0648">Protein biosynthesis</keyword>
<keyword id="KW-1185">Reference proteome</keyword>
<name>SYE_BLOPB</name>
<reference key="1">
    <citation type="journal article" date="2005" name="Genome Res.">
        <title>Genome sequence of Blochmannia pennsylvanicus indicates parallel evolutionary trends among bacterial mutualists of insects.</title>
        <authorList>
            <person name="Degnan P.H."/>
            <person name="Lazarus A.B."/>
            <person name="Wernegreen J.J."/>
        </authorList>
    </citation>
    <scope>NUCLEOTIDE SEQUENCE [LARGE SCALE GENOMIC DNA]</scope>
    <source>
        <strain>BPEN</strain>
    </source>
</reference>
<accession>Q492G6</accession>
<comment type="function">
    <text evidence="1">Catalyzes the attachment of glutamate to tRNA(Glu) in a two-step reaction: glutamate is first activated by ATP to form Glu-AMP and then transferred to the acceptor end of tRNA(Glu).</text>
</comment>
<comment type="catalytic activity">
    <reaction evidence="1">
        <text>tRNA(Glu) + L-glutamate + ATP = L-glutamyl-tRNA(Glu) + AMP + diphosphate</text>
        <dbReference type="Rhea" id="RHEA:23540"/>
        <dbReference type="Rhea" id="RHEA-COMP:9663"/>
        <dbReference type="Rhea" id="RHEA-COMP:9680"/>
        <dbReference type="ChEBI" id="CHEBI:29985"/>
        <dbReference type="ChEBI" id="CHEBI:30616"/>
        <dbReference type="ChEBI" id="CHEBI:33019"/>
        <dbReference type="ChEBI" id="CHEBI:78442"/>
        <dbReference type="ChEBI" id="CHEBI:78520"/>
        <dbReference type="ChEBI" id="CHEBI:456215"/>
        <dbReference type="EC" id="6.1.1.17"/>
    </reaction>
</comment>
<comment type="subunit">
    <text evidence="1">Monomer.</text>
</comment>
<comment type="subcellular location">
    <subcellularLocation>
        <location evidence="1">Cytoplasm</location>
    </subcellularLocation>
</comment>
<comment type="similarity">
    <text evidence="1">Belongs to the class-I aminoacyl-tRNA synthetase family. Glutamate--tRNA ligase type 1 subfamily.</text>
</comment>